<gene>
    <name evidence="2" type="primary">rpl20</name>
</gene>
<feature type="initiator methionine" description="Removed" evidence="1">
    <location>
        <position position="1"/>
    </location>
</feature>
<feature type="chain" id="PRO_0000177314" description="Large ribosomal subunit protein bL20c">
    <location>
        <begin position="2"/>
        <end position="119"/>
    </location>
</feature>
<dbReference type="EMBL" id="AB042240">
    <property type="protein sequence ID" value="BAB47056.1"/>
    <property type="molecule type" value="Genomic_DNA"/>
</dbReference>
<dbReference type="RefSeq" id="NP_114281.1">
    <property type="nucleotide sequence ID" value="NC_002762.1"/>
</dbReference>
<dbReference type="SMR" id="Q95H54"/>
<dbReference type="STRING" id="4565.Q95H54"/>
<dbReference type="PaxDb" id="4565-EPlTAEP00000010036"/>
<dbReference type="EnsemblPlants" id="TraesARI1D03G00577780.1">
    <property type="protein sequence ID" value="TraesARI1D03G00577780.1.CDS1"/>
    <property type="gene ID" value="TraesARI1D03G00577780"/>
</dbReference>
<dbReference type="EnsemblPlants" id="TraesJAG1D03G00570720.1">
    <property type="protein sequence ID" value="TraesJAG1D03G00570720.1.CDS1"/>
    <property type="gene ID" value="TraesJAG1D03G00570720"/>
</dbReference>
<dbReference type="EnsemblPlants" id="TraesJAG3A03G01320110.1">
    <property type="protein sequence ID" value="TraesJAG3A03G01320110.1.CDS1"/>
    <property type="gene ID" value="TraesJAG3A03G01320110"/>
</dbReference>
<dbReference type="EnsemblPlants" id="TraesJAG5D03G03094580.1">
    <property type="protein sequence ID" value="TraesJAG5D03G03094580.1.CDS1"/>
    <property type="gene ID" value="TraesJAG5D03G03094580"/>
</dbReference>
<dbReference type="EnsemblPlants" id="TraesJUL1D03G00574240.1">
    <property type="protein sequence ID" value="TraesJUL1D03G00574240.1.CDS1"/>
    <property type="gene ID" value="TraesJUL1D03G00574240"/>
</dbReference>
<dbReference type="EnsemblPlants" id="TraesJUL2D03G01303060.1">
    <property type="protein sequence ID" value="TraesJUL2D03G01303060.1.CDS1"/>
    <property type="gene ID" value="TraesJUL2D03G01303060"/>
</dbReference>
<dbReference type="EnsemblPlants" id="TraesJUL3A03G01321820.1">
    <property type="protein sequence ID" value="TraesJUL3A03G01321820.1.CDS1"/>
    <property type="gene ID" value="TraesJUL3A03G01321820"/>
</dbReference>
<dbReference type="EnsemblPlants" id="TraesJUL5D03G03121580.1">
    <property type="protein sequence ID" value="TraesJUL5D03G03121580.1.CDS1"/>
    <property type="gene ID" value="TraesJUL5D03G03121580"/>
</dbReference>
<dbReference type="EnsemblPlants" id="TraesKARUn01G0033080.1">
    <property type="protein sequence ID" value="cds.TraesKARUn01G0033080.1"/>
    <property type="gene ID" value="TraesKARUn01G0033080"/>
</dbReference>
<dbReference type="EnsemblPlants" id="TraesKARUn01G0080530.1">
    <property type="protein sequence ID" value="cds.TraesKARUn01G0080530.1"/>
    <property type="gene ID" value="TraesKARUn01G0080530"/>
</dbReference>
<dbReference type="EnsemblPlants" id="TraesKARUn01G0080650.1">
    <property type="protein sequence ID" value="cds.TraesKARUn01G0080650.1"/>
    <property type="gene ID" value="TraesKARUn01G0080650"/>
</dbReference>
<dbReference type="EnsemblPlants" id="TraesKARUn01G0080730.1">
    <property type="protein sequence ID" value="cds.TraesKARUn01G0080730.1"/>
    <property type="gene ID" value="TraesKARUn01G0080730"/>
</dbReference>
<dbReference type="EnsemblPlants" id="TraesKARUn01G0080780.1">
    <property type="protein sequence ID" value="cds.TraesKARUn01G0080780.1"/>
    <property type="gene ID" value="TraesKARUn01G0080780"/>
</dbReference>
<dbReference type="EnsemblPlants" id="TraesKARUn01G0081040.1">
    <property type="protein sequence ID" value="cds.TraesKARUn01G0081040.1"/>
    <property type="gene ID" value="TraesKARUn01G0081040"/>
</dbReference>
<dbReference type="EnsemblPlants" id="TraesKARUn01G0084960.1">
    <property type="protein sequence ID" value="cds.TraesKARUn01G0084960.1"/>
    <property type="gene ID" value="TraesKARUn01G0084960"/>
</dbReference>
<dbReference type="EnsemblPlants" id="TraesKARUn01G0100610.1">
    <property type="protein sequence ID" value="cds.TraesKARUn01G0100610.1"/>
    <property type="gene ID" value="TraesKARUn01G0100610"/>
</dbReference>
<dbReference type="EnsemblPlants" id="TraesKARUn01G0152210.1">
    <property type="protein sequence ID" value="cds.TraesKARUn01G0152210.1"/>
    <property type="gene ID" value="TraesKARUn01G0152210"/>
</dbReference>
<dbReference type="EnsemblPlants" id="TraesKARUn01G0152240.1">
    <property type="protein sequence ID" value="cds.TraesKARUn01G0152240.1"/>
    <property type="gene ID" value="TraesKARUn01G0152240"/>
</dbReference>
<dbReference type="EnsemblPlants" id="TraesKARUn01G0152650.1">
    <property type="protein sequence ID" value="cds.TraesKARUn01G0152650.1"/>
    <property type="gene ID" value="TraesKARUn01G0152650"/>
</dbReference>
<dbReference type="EnsemblPlants" id="TraesKARUn01G0152690.1">
    <property type="protein sequence ID" value="cds.TraesKARUn01G0152690.1"/>
    <property type="gene ID" value="TraesKARUn01G0152690"/>
</dbReference>
<dbReference type="EnsemblPlants" id="TraesKARUn01G0153050.1">
    <property type="protein sequence ID" value="cds.TraesKARUn01G0153050.1"/>
    <property type="gene ID" value="TraesKARUn01G0153050"/>
</dbReference>
<dbReference type="EnsemblPlants" id="TraesKARUn01G0175260.1">
    <property type="protein sequence ID" value="cds.TraesKARUn01G0175260.1"/>
    <property type="gene ID" value="TraesKARUn01G0175260"/>
</dbReference>
<dbReference type="EnsemblPlants" id="TraesKARUn01G0176410.1">
    <property type="protein sequence ID" value="cds.TraesKARUn01G0176410.1"/>
    <property type="gene ID" value="TraesKARUn01G0176410"/>
</dbReference>
<dbReference type="EnsemblPlants" id="TraesKARUn01G0181540.1">
    <property type="protein sequence ID" value="cds.TraesKARUn01G0181540.1"/>
    <property type="gene ID" value="TraesKARUn01G0181540"/>
</dbReference>
<dbReference type="EnsemblPlants" id="TraesLAC1D03G00575260.1">
    <property type="protein sequence ID" value="TraesLAC1D03G00575260.1.CDS1"/>
    <property type="gene ID" value="TraesLAC1D03G00575260"/>
</dbReference>
<dbReference type="EnsemblPlants" id="TraesLAC3A03G01254770.1">
    <property type="protein sequence ID" value="TraesLAC3A03G01254770.1.CDS1"/>
    <property type="gene ID" value="TraesLAC3A03G01254770"/>
</dbReference>
<dbReference type="EnsemblPlants" id="TraesMAC1D03G00570800.1">
    <property type="protein sequence ID" value="TraesMAC1D03G00570800.1.CDS1"/>
    <property type="gene ID" value="TraesMAC1D03G00570800"/>
</dbReference>
<dbReference type="EnsemblPlants" id="TraesNOR1D03G00579230.1">
    <property type="protein sequence ID" value="TraesNOR1D03G00579230.1.CDS1"/>
    <property type="gene ID" value="TraesNOR1D03G00579230"/>
</dbReference>
<dbReference type="EnsemblPlants" id="TraesPARA_EIv1.0_0325040.1">
    <property type="protein sequence ID" value="TraesPARA_EIv1.0_0325040.1.CDS1"/>
    <property type="gene ID" value="TraesPARA_EIv1.0_0325040"/>
</dbReference>
<dbReference type="EnsemblPlants" id="TraesPARA_EIv1.0_0757250.1">
    <property type="protein sequence ID" value="TraesPARA_EIv1.0_0757250.1.CDS1"/>
    <property type="gene ID" value="TraesPARA_EIv1.0_0757250"/>
</dbReference>
<dbReference type="EnsemblPlants" id="TraesPARA_EIv1.0_1800960.1">
    <property type="protein sequence ID" value="TraesPARA_EIv1.0_1800960.1.CDS1"/>
    <property type="gene ID" value="TraesPARA_EIv1.0_1800960"/>
</dbReference>
<dbReference type="EnsemblPlants" id="TraesPARA_EIv1.0_2055510.1">
    <property type="protein sequence ID" value="TraesPARA_EIv1.0_2055510.1.CDS1"/>
    <property type="gene ID" value="TraesPARA_EIv1.0_2055510"/>
</dbReference>
<dbReference type="EnsemblPlants" id="TraesPARA_EIv1.0_2643460.1">
    <property type="protein sequence ID" value="TraesPARA_EIv1.0_2643460.1.CDS1"/>
    <property type="gene ID" value="TraesPARA_EIv1.0_2643460"/>
</dbReference>
<dbReference type="EnsemblPlants" id="TraesPARA_EIv1.0_2643590.1">
    <property type="protein sequence ID" value="TraesPARA_EIv1.0_2643590.1.CDS1"/>
    <property type="gene ID" value="TraesPARA_EIv1.0_2643590"/>
</dbReference>
<dbReference type="EnsemblPlants" id="TraesPARA_EIv1.0_2643780.1">
    <property type="protein sequence ID" value="TraesPARA_EIv1.0_2643780.1.CDS1"/>
    <property type="gene ID" value="TraesPARA_EIv1.0_2643780"/>
</dbReference>
<dbReference type="EnsemblPlants" id="TraesPARA_EIv1.0_2645350.1">
    <property type="protein sequence ID" value="TraesPARA_EIv1.0_2645350.1.CDS1"/>
    <property type="gene ID" value="TraesPARA_EIv1.0_2645350"/>
</dbReference>
<dbReference type="EnsemblPlants" id="TraesPARA_EIv1.0_2647700.1">
    <property type="protein sequence ID" value="TraesPARA_EIv1.0_2647700.1.CDS1"/>
    <property type="gene ID" value="TraesPARA_EIv1.0_2647700"/>
</dbReference>
<dbReference type="EnsemblPlants" id="TraesPARA_EIv1.0_2649180.1">
    <property type="protein sequence ID" value="TraesPARA_EIv1.0_2649180.1.CDS1"/>
    <property type="gene ID" value="TraesPARA_EIv1.0_2649180"/>
</dbReference>
<dbReference type="EnsemblPlants" id="TraesPARA_EIv1.0_2675200.1">
    <property type="protein sequence ID" value="TraesPARA_EIv1.0_2675200.1.CDS1"/>
    <property type="gene ID" value="TraesPARA_EIv1.0_2675200"/>
</dbReference>
<dbReference type="EnsemblPlants" id="TraesPARA_EIv1.0_2676660.1">
    <property type="protein sequence ID" value="TraesPARA_EIv1.0_2676660.1.CDS1"/>
    <property type="gene ID" value="TraesPARA_EIv1.0_2676660"/>
</dbReference>
<dbReference type="EnsemblPlants" id="TraesPARA_EIv1.0_2677600.1">
    <property type="protein sequence ID" value="TraesPARA_EIv1.0_2677600.1.CDS1"/>
    <property type="gene ID" value="TraesPARA_EIv1.0_2677600"/>
</dbReference>
<dbReference type="EnsemblPlants" id="TraesPARA_EIv1.0_2680200.1">
    <property type="protein sequence ID" value="TraesPARA_EIv1.0_2680200.1.CDS1"/>
    <property type="gene ID" value="TraesPARA_EIv1.0_2680200"/>
</dbReference>
<dbReference type="EnsemblPlants" id="TraesPARA_EIv1.0_2680830.1">
    <property type="protein sequence ID" value="TraesPARA_EIv1.0_2680830.1.CDS1"/>
    <property type="gene ID" value="TraesPARA_EIv1.0_2680830"/>
</dbReference>
<dbReference type="EnsemblPlants" id="TraesPARA_EIv1.0_2682040.1">
    <property type="protein sequence ID" value="TraesPARA_EIv1.0_2682040.1.CDS1"/>
    <property type="gene ID" value="TraesPARA_EIv1.0_2682040"/>
</dbReference>
<dbReference type="EnsemblPlants" id="TraesSTA1D03G00570450.1">
    <property type="protein sequence ID" value="TraesSTA1D03G00570450.1.CDS1"/>
    <property type="gene ID" value="TraesSTA1D03G00570450"/>
</dbReference>
<dbReference type="EnsemblPlants" id="TraesSTA5D03G03087310.1">
    <property type="protein sequence ID" value="TraesSTA5D03G03087310.1.CDS1"/>
    <property type="gene ID" value="TraesSTA5D03G03087310"/>
</dbReference>
<dbReference type="EnsemblPlants" id="TraesSYM1D03G00578690.1">
    <property type="protein sequence ID" value="TraesSYM1D03G00578690.1.CDS1"/>
    <property type="gene ID" value="TraesSYM1D03G00578690"/>
</dbReference>
<dbReference type="GeneID" id="803089"/>
<dbReference type="Gramene" id="TraesARI1D03G00577780.1">
    <property type="protein sequence ID" value="TraesARI1D03G00577780.1.CDS1"/>
    <property type="gene ID" value="TraesARI1D03G00577780"/>
</dbReference>
<dbReference type="Gramene" id="TraesJAG1D03G00570720.1">
    <property type="protein sequence ID" value="TraesJAG1D03G00570720.1.CDS1"/>
    <property type="gene ID" value="TraesJAG1D03G00570720"/>
</dbReference>
<dbReference type="Gramene" id="TraesJAG3A03G01320110.1">
    <property type="protein sequence ID" value="TraesJAG3A03G01320110.1.CDS1"/>
    <property type="gene ID" value="TraesJAG3A03G01320110"/>
</dbReference>
<dbReference type="Gramene" id="TraesJAG5D03G03094580.1">
    <property type="protein sequence ID" value="TraesJAG5D03G03094580.1.CDS1"/>
    <property type="gene ID" value="TraesJAG5D03G03094580"/>
</dbReference>
<dbReference type="Gramene" id="TraesJUL1D03G00574240.1">
    <property type="protein sequence ID" value="TraesJUL1D03G00574240.1.CDS1"/>
    <property type="gene ID" value="TraesJUL1D03G00574240"/>
</dbReference>
<dbReference type="Gramene" id="TraesJUL2D03G01303060.1">
    <property type="protein sequence ID" value="TraesJUL2D03G01303060.1.CDS1"/>
    <property type="gene ID" value="TraesJUL2D03G01303060"/>
</dbReference>
<dbReference type="Gramene" id="TraesJUL3A03G01321820.1">
    <property type="protein sequence ID" value="TraesJUL3A03G01321820.1.CDS1"/>
    <property type="gene ID" value="TraesJUL3A03G01321820"/>
</dbReference>
<dbReference type="Gramene" id="TraesJUL5D03G03121580.1">
    <property type="protein sequence ID" value="TraesJUL5D03G03121580.1.CDS1"/>
    <property type="gene ID" value="TraesJUL5D03G03121580"/>
</dbReference>
<dbReference type="Gramene" id="TraesKARUn01G0033080.1">
    <property type="protein sequence ID" value="cds.TraesKARUn01G0033080.1"/>
    <property type="gene ID" value="TraesKARUn01G0033080"/>
</dbReference>
<dbReference type="Gramene" id="TraesKARUn01G0080530.1">
    <property type="protein sequence ID" value="cds.TraesKARUn01G0080530.1"/>
    <property type="gene ID" value="TraesKARUn01G0080530"/>
</dbReference>
<dbReference type="Gramene" id="TraesKARUn01G0080650.1">
    <property type="protein sequence ID" value="cds.TraesKARUn01G0080650.1"/>
    <property type="gene ID" value="TraesKARUn01G0080650"/>
</dbReference>
<dbReference type="Gramene" id="TraesKARUn01G0080730.1">
    <property type="protein sequence ID" value="cds.TraesKARUn01G0080730.1"/>
    <property type="gene ID" value="TraesKARUn01G0080730"/>
</dbReference>
<dbReference type="Gramene" id="TraesKARUn01G0080780.1">
    <property type="protein sequence ID" value="cds.TraesKARUn01G0080780.1"/>
    <property type="gene ID" value="TraesKARUn01G0080780"/>
</dbReference>
<dbReference type="Gramene" id="TraesKARUn01G0081040.1">
    <property type="protein sequence ID" value="cds.TraesKARUn01G0081040.1"/>
    <property type="gene ID" value="TraesKARUn01G0081040"/>
</dbReference>
<dbReference type="Gramene" id="TraesKARUn01G0084960.1">
    <property type="protein sequence ID" value="cds.TraesKARUn01G0084960.1"/>
    <property type="gene ID" value="TraesKARUn01G0084960"/>
</dbReference>
<dbReference type="Gramene" id="TraesKARUn01G0100610.1">
    <property type="protein sequence ID" value="cds.TraesKARUn01G0100610.1"/>
    <property type="gene ID" value="TraesKARUn01G0100610"/>
</dbReference>
<dbReference type="Gramene" id="TraesKARUn01G0152210.1">
    <property type="protein sequence ID" value="cds.TraesKARUn01G0152210.1"/>
    <property type="gene ID" value="TraesKARUn01G0152210"/>
</dbReference>
<dbReference type="Gramene" id="TraesKARUn01G0152240.1">
    <property type="protein sequence ID" value="cds.TraesKARUn01G0152240.1"/>
    <property type="gene ID" value="TraesKARUn01G0152240"/>
</dbReference>
<dbReference type="Gramene" id="TraesKARUn01G0152650.1">
    <property type="protein sequence ID" value="cds.TraesKARUn01G0152650.1"/>
    <property type="gene ID" value="TraesKARUn01G0152650"/>
</dbReference>
<dbReference type="Gramene" id="TraesKARUn01G0152690.1">
    <property type="protein sequence ID" value="cds.TraesKARUn01G0152690.1"/>
    <property type="gene ID" value="TraesKARUn01G0152690"/>
</dbReference>
<dbReference type="Gramene" id="TraesKARUn01G0153050.1">
    <property type="protein sequence ID" value="cds.TraesKARUn01G0153050.1"/>
    <property type="gene ID" value="TraesKARUn01G0153050"/>
</dbReference>
<dbReference type="Gramene" id="TraesKARUn01G0175260.1">
    <property type="protein sequence ID" value="cds.TraesKARUn01G0175260.1"/>
    <property type="gene ID" value="TraesKARUn01G0175260"/>
</dbReference>
<dbReference type="Gramene" id="TraesKARUn01G0176410.1">
    <property type="protein sequence ID" value="cds.TraesKARUn01G0176410.1"/>
    <property type="gene ID" value="TraesKARUn01G0176410"/>
</dbReference>
<dbReference type="Gramene" id="TraesKARUn01G0181540.1">
    <property type="protein sequence ID" value="cds.TraesKARUn01G0181540.1"/>
    <property type="gene ID" value="TraesKARUn01G0181540"/>
</dbReference>
<dbReference type="Gramene" id="TraesLAC1D03G00575260.1">
    <property type="protein sequence ID" value="TraesLAC1D03G00575260.1.CDS1"/>
    <property type="gene ID" value="TraesLAC1D03G00575260"/>
</dbReference>
<dbReference type="Gramene" id="TraesLAC3A03G01254770.1">
    <property type="protein sequence ID" value="TraesLAC3A03G01254770.1.CDS1"/>
    <property type="gene ID" value="TraesLAC3A03G01254770"/>
</dbReference>
<dbReference type="Gramene" id="TraesMAC1D03G00570800.1">
    <property type="protein sequence ID" value="TraesMAC1D03G00570800.1.CDS1"/>
    <property type="gene ID" value="TraesMAC1D03G00570800"/>
</dbReference>
<dbReference type="Gramene" id="TraesNOR1D03G00579230.1">
    <property type="protein sequence ID" value="TraesNOR1D03G00579230.1.CDS1"/>
    <property type="gene ID" value="TraesNOR1D03G00579230"/>
</dbReference>
<dbReference type="Gramene" id="TraesPARA_EIv1.0_0325040.1">
    <property type="protein sequence ID" value="TraesPARA_EIv1.0_0325040.1.CDS1"/>
    <property type="gene ID" value="TraesPARA_EIv1.0_0325040"/>
</dbReference>
<dbReference type="Gramene" id="TraesPARA_EIv1.0_0757250.1">
    <property type="protein sequence ID" value="TraesPARA_EIv1.0_0757250.1.CDS1"/>
    <property type="gene ID" value="TraesPARA_EIv1.0_0757250"/>
</dbReference>
<dbReference type="Gramene" id="TraesPARA_EIv1.0_1800960.1">
    <property type="protein sequence ID" value="TraesPARA_EIv1.0_1800960.1.CDS1"/>
    <property type="gene ID" value="TraesPARA_EIv1.0_1800960"/>
</dbReference>
<dbReference type="Gramene" id="TraesPARA_EIv1.0_2055510.1">
    <property type="protein sequence ID" value="TraesPARA_EIv1.0_2055510.1.CDS1"/>
    <property type="gene ID" value="TraesPARA_EIv1.0_2055510"/>
</dbReference>
<dbReference type="Gramene" id="TraesPARA_EIv1.0_2643460.1">
    <property type="protein sequence ID" value="TraesPARA_EIv1.0_2643460.1.CDS1"/>
    <property type="gene ID" value="TraesPARA_EIv1.0_2643460"/>
</dbReference>
<dbReference type="Gramene" id="TraesPARA_EIv1.0_2643590.1">
    <property type="protein sequence ID" value="TraesPARA_EIv1.0_2643590.1.CDS1"/>
    <property type="gene ID" value="TraesPARA_EIv1.0_2643590"/>
</dbReference>
<dbReference type="Gramene" id="TraesPARA_EIv1.0_2643780.1">
    <property type="protein sequence ID" value="TraesPARA_EIv1.0_2643780.1.CDS1"/>
    <property type="gene ID" value="TraesPARA_EIv1.0_2643780"/>
</dbReference>
<dbReference type="Gramene" id="TraesPARA_EIv1.0_2645350.1">
    <property type="protein sequence ID" value="TraesPARA_EIv1.0_2645350.1.CDS1"/>
    <property type="gene ID" value="TraesPARA_EIv1.0_2645350"/>
</dbReference>
<dbReference type="Gramene" id="TraesPARA_EIv1.0_2647700.1">
    <property type="protein sequence ID" value="TraesPARA_EIv1.0_2647700.1.CDS1"/>
    <property type="gene ID" value="TraesPARA_EIv1.0_2647700"/>
</dbReference>
<dbReference type="Gramene" id="TraesPARA_EIv1.0_2649180.1">
    <property type="protein sequence ID" value="TraesPARA_EIv1.0_2649180.1.CDS1"/>
    <property type="gene ID" value="TraesPARA_EIv1.0_2649180"/>
</dbReference>
<dbReference type="Gramene" id="TraesPARA_EIv1.0_2675200.1">
    <property type="protein sequence ID" value="TraesPARA_EIv1.0_2675200.1.CDS1"/>
    <property type="gene ID" value="TraesPARA_EIv1.0_2675200"/>
</dbReference>
<dbReference type="Gramene" id="TraesPARA_EIv1.0_2676660.1">
    <property type="protein sequence ID" value="TraesPARA_EIv1.0_2676660.1.CDS1"/>
    <property type="gene ID" value="TraesPARA_EIv1.0_2676660"/>
</dbReference>
<dbReference type="Gramene" id="TraesPARA_EIv1.0_2677600.1">
    <property type="protein sequence ID" value="TraesPARA_EIv1.0_2677600.1.CDS1"/>
    <property type="gene ID" value="TraesPARA_EIv1.0_2677600"/>
</dbReference>
<dbReference type="Gramene" id="TraesPARA_EIv1.0_2680200.1">
    <property type="protein sequence ID" value="TraesPARA_EIv1.0_2680200.1.CDS1"/>
    <property type="gene ID" value="TraesPARA_EIv1.0_2680200"/>
</dbReference>
<dbReference type="Gramene" id="TraesPARA_EIv1.0_2680830.1">
    <property type="protein sequence ID" value="TraesPARA_EIv1.0_2680830.1.CDS1"/>
    <property type="gene ID" value="TraesPARA_EIv1.0_2680830"/>
</dbReference>
<dbReference type="Gramene" id="TraesPARA_EIv1.0_2682040.1">
    <property type="protein sequence ID" value="TraesPARA_EIv1.0_2682040.1.CDS1"/>
    <property type="gene ID" value="TraesPARA_EIv1.0_2682040"/>
</dbReference>
<dbReference type="Gramene" id="TraesSTA1D03G00570450.1">
    <property type="protein sequence ID" value="TraesSTA1D03G00570450.1.CDS1"/>
    <property type="gene ID" value="TraesSTA1D03G00570450"/>
</dbReference>
<dbReference type="Gramene" id="TraesSTA5D03G03087310.1">
    <property type="protein sequence ID" value="TraesSTA5D03G03087310.1.CDS1"/>
    <property type="gene ID" value="TraesSTA5D03G03087310"/>
</dbReference>
<dbReference type="Gramene" id="TraesSYM1D03G00578690.1">
    <property type="protein sequence ID" value="TraesSYM1D03G00578690.1.CDS1"/>
    <property type="gene ID" value="TraesSYM1D03G00578690"/>
</dbReference>
<dbReference type="KEGG" id="taes:803089"/>
<dbReference type="eggNOG" id="KOG4707">
    <property type="taxonomic scope" value="Eukaryota"/>
</dbReference>
<dbReference type="HOGENOM" id="CLU_123265_0_1_1"/>
<dbReference type="OrthoDB" id="512793at2759"/>
<dbReference type="Proteomes" id="UP000019116">
    <property type="component" value="Chloroplast"/>
</dbReference>
<dbReference type="GO" id="GO:0009507">
    <property type="term" value="C:chloroplast"/>
    <property type="evidence" value="ECO:0007669"/>
    <property type="project" value="UniProtKB-SubCell"/>
</dbReference>
<dbReference type="GO" id="GO:1990904">
    <property type="term" value="C:ribonucleoprotein complex"/>
    <property type="evidence" value="ECO:0007669"/>
    <property type="project" value="UniProtKB-KW"/>
</dbReference>
<dbReference type="GO" id="GO:0005840">
    <property type="term" value="C:ribosome"/>
    <property type="evidence" value="ECO:0007669"/>
    <property type="project" value="UniProtKB-KW"/>
</dbReference>
<dbReference type="GO" id="GO:0019843">
    <property type="term" value="F:rRNA binding"/>
    <property type="evidence" value="ECO:0007669"/>
    <property type="project" value="UniProtKB-UniRule"/>
</dbReference>
<dbReference type="GO" id="GO:0003735">
    <property type="term" value="F:structural constituent of ribosome"/>
    <property type="evidence" value="ECO:0000318"/>
    <property type="project" value="GO_Central"/>
</dbReference>
<dbReference type="GO" id="GO:0000027">
    <property type="term" value="P:ribosomal large subunit assembly"/>
    <property type="evidence" value="ECO:0007669"/>
    <property type="project" value="UniProtKB-UniRule"/>
</dbReference>
<dbReference type="GO" id="GO:0006412">
    <property type="term" value="P:translation"/>
    <property type="evidence" value="ECO:0007669"/>
    <property type="project" value="InterPro"/>
</dbReference>
<dbReference type="CDD" id="cd07026">
    <property type="entry name" value="Ribosomal_L20"/>
    <property type="match status" value="1"/>
</dbReference>
<dbReference type="FunFam" id="1.10.1900.20:FF:000002">
    <property type="entry name" value="50S ribosomal protein L20, chloroplastic"/>
    <property type="match status" value="1"/>
</dbReference>
<dbReference type="Gene3D" id="6.10.160.10">
    <property type="match status" value="1"/>
</dbReference>
<dbReference type="Gene3D" id="1.10.1900.20">
    <property type="entry name" value="Ribosomal protein L20"/>
    <property type="match status" value="1"/>
</dbReference>
<dbReference type="HAMAP" id="MF_00382">
    <property type="entry name" value="Ribosomal_bL20"/>
    <property type="match status" value="1"/>
</dbReference>
<dbReference type="InterPro" id="IPR005813">
    <property type="entry name" value="Ribosomal_bL20"/>
</dbReference>
<dbReference type="InterPro" id="IPR049946">
    <property type="entry name" value="RIBOSOMAL_L20_CS"/>
</dbReference>
<dbReference type="InterPro" id="IPR035566">
    <property type="entry name" value="Ribosomal_protein_bL20_C"/>
</dbReference>
<dbReference type="NCBIfam" id="TIGR01032">
    <property type="entry name" value="rplT_bact"/>
    <property type="match status" value="1"/>
</dbReference>
<dbReference type="PANTHER" id="PTHR10986">
    <property type="entry name" value="39S RIBOSOMAL PROTEIN L20"/>
    <property type="match status" value="1"/>
</dbReference>
<dbReference type="Pfam" id="PF00453">
    <property type="entry name" value="Ribosomal_L20"/>
    <property type="match status" value="1"/>
</dbReference>
<dbReference type="PRINTS" id="PR00062">
    <property type="entry name" value="RIBOSOMALL20"/>
</dbReference>
<dbReference type="SUPFAM" id="SSF74731">
    <property type="entry name" value="Ribosomal protein L20"/>
    <property type="match status" value="1"/>
</dbReference>
<dbReference type="PROSITE" id="PS00937">
    <property type="entry name" value="RIBOSOMAL_L20"/>
    <property type="match status" value="1"/>
</dbReference>
<name>RK20_WHEAT</name>
<proteinExistence type="inferred from homology"/>
<protein>
    <recommendedName>
        <fullName evidence="2">Large ribosomal subunit protein bL20c</fullName>
    </recommendedName>
    <alternativeName>
        <fullName evidence="3">50S ribosomal protein L20, chloroplastic</fullName>
    </alternativeName>
</protein>
<keyword id="KW-0150">Chloroplast</keyword>
<keyword id="KW-0934">Plastid</keyword>
<keyword id="KW-1185">Reference proteome</keyword>
<keyword id="KW-0687">Ribonucleoprotein</keyword>
<keyword id="KW-0689">Ribosomal protein</keyword>
<keyword id="KW-0694">RNA-binding</keyword>
<keyword id="KW-0699">rRNA-binding</keyword>
<evidence type="ECO:0000250" key="1"/>
<evidence type="ECO:0000255" key="2">
    <source>
        <dbReference type="HAMAP-Rule" id="MF_00382"/>
    </source>
</evidence>
<evidence type="ECO:0000305" key="3"/>
<accession>Q95H54</accession>
<organism>
    <name type="scientific">Triticum aestivum</name>
    <name type="common">Wheat</name>
    <dbReference type="NCBI Taxonomy" id="4565"/>
    <lineage>
        <taxon>Eukaryota</taxon>
        <taxon>Viridiplantae</taxon>
        <taxon>Streptophyta</taxon>
        <taxon>Embryophyta</taxon>
        <taxon>Tracheophyta</taxon>
        <taxon>Spermatophyta</taxon>
        <taxon>Magnoliopsida</taxon>
        <taxon>Liliopsida</taxon>
        <taxon>Poales</taxon>
        <taxon>Poaceae</taxon>
        <taxon>BOP clade</taxon>
        <taxon>Pooideae</taxon>
        <taxon>Triticodae</taxon>
        <taxon>Triticeae</taxon>
        <taxon>Triticinae</taxon>
        <taxon>Triticum</taxon>
    </lineage>
</organism>
<sequence>MTRVPRGYIARRRRTKMRSFASNFRGAHLRLNRMITQQVKRAFVSSHRDRGRQKRDFRRLWITRINAATRVYKVFDSYSKLIHNLYKKKLILNRKMLAQVAVSNPNNLYTISNKIKIIN</sequence>
<geneLocation type="chloroplast"/>
<reference key="1">
    <citation type="journal article" date="2000" name="Plant Mol. Biol. Rep.">
        <title>Chinese spring wheat (Triticum aestivum L.) chloroplast genome: complete sequence and contig clones.</title>
        <authorList>
            <person name="Ogihara Y."/>
            <person name="Isono K."/>
            <person name="Kojima T."/>
            <person name="Endo A."/>
            <person name="Hanaoka M."/>
            <person name="Shiina T."/>
            <person name="Terachi T."/>
            <person name="Utsugi S."/>
            <person name="Murata M."/>
            <person name="Mori N."/>
            <person name="Takumi S."/>
            <person name="Ikeo K."/>
            <person name="Gojobori T."/>
            <person name="Murai R."/>
            <person name="Murai K."/>
            <person name="Matsuoka Y."/>
            <person name="Ohnishi Y."/>
            <person name="Tajiri H."/>
            <person name="Tsunewaki K."/>
        </authorList>
    </citation>
    <scope>NUCLEOTIDE SEQUENCE [LARGE SCALE GENOMIC DNA]</scope>
    <source>
        <strain>cv. Chinese Spring</strain>
    </source>
</reference>
<comment type="function">
    <text evidence="2">Binds directly to 23S ribosomal RNA and is necessary for the in vitro assembly process of the 50S ribosomal subunit. It is not involved in the protein synthesizing functions of that subunit.</text>
</comment>
<comment type="subcellular location">
    <subcellularLocation>
        <location>Plastid</location>
        <location>Chloroplast</location>
    </subcellularLocation>
</comment>
<comment type="similarity">
    <text evidence="2">Belongs to the bacterial ribosomal protein bL20 family.</text>
</comment>